<name>GRM_MICEC</name>
<proteinExistence type="evidence at protein level"/>
<comment type="function">
    <text evidence="2 3">Specifically methylates the N(7) position of guanine 1405 in 16S rRNA. Confers resistance to various aminoglycosides, including gentamicin and kanamycin.</text>
</comment>
<comment type="catalytic activity">
    <reaction evidence="2">
        <text>guanosine(1405) in 16S rRNA + S-adenosyl-L-methionine = N(7)-methylguanosine(1405) in 16S rRNA + S-adenosyl-L-homocysteine</text>
        <dbReference type="Rhea" id="RHEA:42772"/>
        <dbReference type="Rhea" id="RHEA-COMP:10225"/>
        <dbReference type="Rhea" id="RHEA-COMP:10226"/>
        <dbReference type="ChEBI" id="CHEBI:57856"/>
        <dbReference type="ChEBI" id="CHEBI:59789"/>
        <dbReference type="ChEBI" id="CHEBI:74269"/>
        <dbReference type="ChEBI" id="CHEBI:74480"/>
        <dbReference type="EC" id="2.1.1.179"/>
    </reaction>
</comment>
<comment type="miscellaneous">
    <text>Protects M.echinospora, which is an antibiotic-producing bacterium, against self-intoxication.</text>
</comment>
<comment type="similarity">
    <text evidence="4">Belongs to the methyltransferase superfamily. Aminoglycoside resistance family.</text>
</comment>
<protein>
    <recommendedName>
        <fullName>16S rRNA (guanine(1405)-N(7))-methyltransferase</fullName>
        <ecNumber>2.1.1.179</ecNumber>
    </recommendedName>
    <alternativeName>
        <fullName>16S rRNA m7G1405 methyltransferase</fullName>
    </alternativeName>
    <alternativeName>
        <fullName>Gentamicin-resistance methyltransferase</fullName>
    </alternativeName>
</protein>
<accession>P24618</accession>
<organism>
    <name type="scientific">Micromonospora echinospora</name>
    <name type="common">Micromonospora purpurea</name>
    <dbReference type="NCBI Taxonomy" id="1877"/>
    <lineage>
        <taxon>Bacteria</taxon>
        <taxon>Bacillati</taxon>
        <taxon>Actinomycetota</taxon>
        <taxon>Actinomycetes</taxon>
        <taxon>Micromonosporales</taxon>
        <taxon>Micromonosporaceae</taxon>
        <taxon>Micromonospora</taxon>
    </lineage>
</organism>
<dbReference type="EC" id="2.1.1.179"/>
<dbReference type="EMBL" id="M55520">
    <property type="protein sequence ID" value="AAA25336.1"/>
    <property type="molecule type" value="Genomic_DNA"/>
</dbReference>
<dbReference type="PIR" id="JG0017">
    <property type="entry name" value="JG0017"/>
</dbReference>
<dbReference type="RefSeq" id="WP_088981637.1">
    <property type="nucleotide sequence ID" value="NZ_LT607413.1"/>
</dbReference>
<dbReference type="SMR" id="P24618"/>
<dbReference type="KEGG" id="ag:AAA25336"/>
<dbReference type="OrthoDB" id="3352509at2"/>
<dbReference type="GO" id="GO:0008649">
    <property type="term" value="F:rRNA methyltransferase activity"/>
    <property type="evidence" value="ECO:0007669"/>
    <property type="project" value="InterPro"/>
</dbReference>
<dbReference type="GO" id="GO:0046677">
    <property type="term" value="P:response to antibiotic"/>
    <property type="evidence" value="ECO:0007669"/>
    <property type="project" value="UniProtKB-KW"/>
</dbReference>
<dbReference type="Gene3D" id="1.10.8.10">
    <property type="entry name" value="DNA helicase RuvA subunit, C-terminal domain"/>
    <property type="match status" value="1"/>
</dbReference>
<dbReference type="Gene3D" id="3.40.50.150">
    <property type="entry name" value="Vaccinia Virus protein VP39"/>
    <property type="match status" value="1"/>
</dbReference>
<dbReference type="InterPro" id="IPR025981">
    <property type="entry name" value="rRNA_MeTrfase"/>
</dbReference>
<dbReference type="InterPro" id="IPR010769">
    <property type="entry name" value="rRNA_MeTrfase_GmN_bac"/>
</dbReference>
<dbReference type="InterPro" id="IPR029063">
    <property type="entry name" value="SAM-dependent_MTases_sf"/>
</dbReference>
<dbReference type="NCBIfam" id="NF000466">
    <property type="entry name" value="16S_rRNA_Rmt_gen"/>
    <property type="match status" value="1"/>
</dbReference>
<dbReference type="Pfam" id="PF07091">
    <property type="entry name" value="FmrO"/>
    <property type="match status" value="1"/>
</dbReference>
<dbReference type="PIRSF" id="PIRSF015852">
    <property type="entry name" value="RRNA_mtase_Grm"/>
    <property type="match status" value="1"/>
</dbReference>
<keyword id="KW-0046">Antibiotic resistance</keyword>
<keyword id="KW-0489">Methyltransferase</keyword>
<keyword id="KW-0698">rRNA processing</keyword>
<keyword id="KW-0949">S-adenosyl-L-methionine</keyword>
<keyword id="KW-0808">Transferase</keyword>
<gene>
    <name type="primary">grm</name>
    <name type="synonym">grmA</name>
</gene>
<feature type="chain" id="PRO_0000083854" description="16S rRNA (guanine(1405)-N(7))-methyltransferase">
    <location>
        <begin position="1"/>
        <end position="274"/>
    </location>
</feature>
<feature type="binding site" evidence="1">
    <location>
        <position position="64"/>
    </location>
    <ligand>
        <name>S-adenosyl-L-methionine</name>
        <dbReference type="ChEBI" id="CHEBI:59789"/>
    </ligand>
</feature>
<feature type="binding site" evidence="1">
    <location>
        <begin position="102"/>
        <end position="104"/>
    </location>
    <ligand>
        <name>S-adenosyl-L-methionine</name>
        <dbReference type="ChEBI" id="CHEBI:59789"/>
    </ligand>
</feature>
<feature type="binding site" evidence="1">
    <location>
        <position position="108"/>
    </location>
    <ligand>
        <name>S-adenosyl-L-methionine</name>
        <dbReference type="ChEBI" id="CHEBI:59789"/>
    </ligand>
</feature>
<feature type="binding site" evidence="1">
    <location>
        <position position="133"/>
    </location>
    <ligand>
        <name>S-adenosyl-L-methionine</name>
        <dbReference type="ChEBI" id="CHEBI:59789"/>
    </ligand>
</feature>
<feature type="binding site" evidence="1">
    <location>
        <position position="156"/>
    </location>
    <ligand>
        <name>S-adenosyl-L-methionine</name>
        <dbReference type="ChEBI" id="CHEBI:59789"/>
    </ligand>
</feature>
<feature type="binding site" evidence="1">
    <location>
        <begin position="182"/>
        <end position="183"/>
    </location>
    <ligand>
        <name>S-adenosyl-L-methionine</name>
        <dbReference type="ChEBI" id="CHEBI:59789"/>
    </ligand>
</feature>
<feature type="binding site" evidence="1">
    <location>
        <position position="198"/>
    </location>
    <ligand>
        <name>S-adenosyl-L-methionine</name>
        <dbReference type="ChEBI" id="CHEBI:59789"/>
    </ligand>
</feature>
<feature type="binding site" evidence="1">
    <location>
        <position position="207"/>
    </location>
    <ligand>
        <name>S-adenosyl-L-methionine</name>
        <dbReference type="ChEBI" id="CHEBI:59789"/>
    </ligand>
</feature>
<sequence length="274" mass="30542">MTTSAPEDRIDQVEQAITKSRRYQTVAPATVRRLARAALVAARGDVPDAVKRTKRGLHEIYGAFLPPSPPNYAALLRQLDSAVDAGDDEAVRAALRRAMSVHVSTRERLPHLAEFYQEIFRHVPQPNTLRDLACGLNPLAAPWMGLSDQTVYVASDIDARLIGFVDAALTRLGVAHRTSVVDLLEDRLDEPTDVTLLLKTLPCLETQRRGSGWEVIDIVNSPIIVVTFPTKSLGQRSKGMFQNYSQSFESQARERSCRIQRLEIGNELIYVIQK</sequence>
<reference key="1">
    <citation type="journal article" date="1991" name="Gene">
        <title>Cloning and characterization of gentamicin-resistance genes from Micromonospora purpurea and Micromonospora rosea.</title>
        <authorList>
            <person name="Kelemen G.H."/>
            <person name="Cundliffe E."/>
            <person name="Financsek I."/>
        </authorList>
    </citation>
    <scope>NUCLEOTIDE SEQUENCE [GENOMIC DNA]</scope>
    <scope>FUNCTION IN ANTIBIOTIC RESISTANCE</scope>
</reference>
<reference key="2">
    <citation type="journal article" date="2009" name="Nucleic Acids Res.">
        <title>Determination of the target nucleosides for members of two families of 16S rRNA methyltransferases that confer resistance to partially overlapping groups of aminoglycoside antibiotics.</title>
        <authorList>
            <person name="Savic M."/>
            <person name="Lovric J."/>
            <person name="Tomic T.I."/>
            <person name="Vasiljevic B."/>
            <person name="Conn G.L."/>
        </authorList>
    </citation>
    <scope>FUNCTION</scope>
    <scope>CATALYTIC ACTIVITY</scope>
</reference>
<evidence type="ECO:0000250" key="1"/>
<evidence type="ECO:0000269" key="2">
    <source>
    </source>
</evidence>
<evidence type="ECO:0000269" key="3">
    <source>
    </source>
</evidence>
<evidence type="ECO:0000305" key="4"/>